<feature type="chain" id="PRO_0000385006" description="Protein SEY1">
    <location>
        <begin position="1"/>
        <end position="776"/>
    </location>
</feature>
<feature type="topological domain" description="Cytoplasmic" evidence="1">
    <location>
        <begin position="1"/>
        <end position="681"/>
    </location>
</feature>
<feature type="transmembrane region" description="Helical" evidence="1">
    <location>
        <begin position="682"/>
        <end position="702"/>
    </location>
</feature>
<feature type="topological domain" description="Lumenal" evidence="1">
    <location>
        <begin position="703"/>
        <end position="705"/>
    </location>
</feature>
<feature type="transmembrane region" description="Helical" evidence="1">
    <location>
        <begin position="706"/>
        <end position="726"/>
    </location>
</feature>
<feature type="topological domain" description="Cytoplasmic" evidence="1">
    <location>
        <begin position="727"/>
        <end position="776"/>
    </location>
</feature>
<feature type="domain" description="GB1/RHD3-type G" evidence="2">
    <location>
        <begin position="34"/>
        <end position="263"/>
    </location>
</feature>
<feature type="binding site" evidence="1">
    <location>
        <begin position="44"/>
        <end position="51"/>
    </location>
    <ligand>
        <name>GTP</name>
        <dbReference type="ChEBI" id="CHEBI:37565"/>
    </ligand>
</feature>
<comment type="function">
    <text evidence="1">Cooperates with the reticulon proteins RTN1 and RTN2 and the tubule-shaping DP1 family protein YOP1 to generate and maintain the structure of the tubular endoplasmic reticulum network. Has GTPase activity, which is required for its function in ER organization.</text>
</comment>
<comment type="subunit">
    <text>Interacts with RTN1 and YOP1; GTP binding is not required for these interactions.</text>
</comment>
<comment type="subcellular location">
    <subcellularLocation>
        <location evidence="1">Endoplasmic reticulum membrane</location>
        <topology evidence="1">Multi-pass membrane protein</topology>
    </subcellularLocation>
    <text evidence="1">Enriched in the cortical ER. Concentrated in punctae along the ER tubules.</text>
</comment>
<comment type="similarity">
    <text evidence="2">Belongs to the TRAFAC class dynamin-like GTPase superfamily. GB1/RHD3 GTPase family. RHD3 subfamily.</text>
</comment>
<accession>B5VS52</accession>
<keyword id="KW-0256">Endoplasmic reticulum</keyword>
<keyword id="KW-0342">GTP-binding</keyword>
<keyword id="KW-0378">Hydrolase</keyword>
<keyword id="KW-0472">Membrane</keyword>
<keyword id="KW-0547">Nucleotide-binding</keyword>
<keyword id="KW-0812">Transmembrane</keyword>
<keyword id="KW-1133">Transmembrane helix</keyword>
<organism>
    <name type="scientific">Saccharomyces cerevisiae (strain AWRI1631)</name>
    <name type="common">Baker's yeast</name>
    <dbReference type="NCBI Taxonomy" id="545124"/>
    <lineage>
        <taxon>Eukaryota</taxon>
        <taxon>Fungi</taxon>
        <taxon>Dikarya</taxon>
        <taxon>Ascomycota</taxon>
        <taxon>Saccharomycotina</taxon>
        <taxon>Saccharomycetes</taxon>
        <taxon>Saccharomycetales</taxon>
        <taxon>Saccharomycetaceae</taxon>
        <taxon>Saccharomyces</taxon>
    </lineage>
</organism>
<protein>
    <recommendedName>
        <fullName evidence="1">Protein SEY1</fullName>
        <ecNumber evidence="1">3.6.5.-</ecNumber>
    </recommendedName>
    <alternativeName>
        <fullName evidence="1">Synthetic enhancer of YOP1 protein</fullName>
    </alternativeName>
</protein>
<evidence type="ECO:0000255" key="1">
    <source>
        <dbReference type="HAMAP-Rule" id="MF_03109"/>
    </source>
</evidence>
<evidence type="ECO:0000255" key="2">
    <source>
        <dbReference type="PROSITE-ProRule" id="PRU01052"/>
    </source>
</evidence>
<reference key="1">
    <citation type="journal article" date="2008" name="FEMS Yeast Res.">
        <title>Comparative genome analysis of a Saccharomyces cerevisiae wine strain.</title>
        <authorList>
            <person name="Borneman A.R."/>
            <person name="Forgan A.H."/>
            <person name="Pretorius I.S."/>
            <person name="Chambers P.J."/>
        </authorList>
    </citation>
    <scope>NUCLEOTIDE SEQUENCE [LARGE SCALE GENOMIC DNA]</scope>
    <source>
        <strain>AWRI1631</strain>
    </source>
</reference>
<proteinExistence type="inferred from homology"/>
<sequence length="776" mass="89422">MADRSAIQLIDEEKEFHQSALQYFQQCIGNRDVGLDYHVISVFGSQSSGKSTLLNVLFNTNFDTMDAQVKRQQTTKGIWLAHTKQVNTTIEIDNDRPDIFVLDVEGSDGSERGEDQDFERKAALFAIAVSEVLIVNMWEQQIGLYQGNNMALLKTVFEVNLSLFGKNDNDHKVLLLFVIRDHVGVTPLSSLSDSVTRELEKIWTELSKPAGCEGSSLYDYFDLKFVGLAHKLLQEDKFTQDVKKLGDSFVMKGTENYYFKPQYHHRLPLDGWTMYAENCWDQIERNKDLDLPTQQILVARFKTEEISNEALEEFISKYDESIAPLKGNLGSLTSQLVKLKEECLTKYDEQASRYARNVYMEKREALNTKLNSHISGTINEFLESLMEKLWDDLKLEVSSRDKATTSFVESVAAGKSKIEKEFNESMETFKKLGLLISNEEITCKFSDDIEERIKQLRDAELKAKIGRIKKNLVPELKDHVIHLLSHPSKKVWDDIMNDFESTIKDNISAYQVEKDKYDFKIGLSESENAKIYKNIRILAWRTLDTTVHDYLKIDTIVSILRDRFEDVFRYDAEGSPRLWKTEEEIDGAFRVAKEHALEVFEVLSLAVTSDNVEIIPDVPMAEEESGEDNEIYRDNEGVFHSRRFAHILTELQKENVLDQFRRQINITVLDSKRSIITTRTHIPPWIYVLLAVLGWNEFVAVIRNPLFVTLTLILGATFFVIHKFGLWGPVVNVVQSAVGETRTAIKDKLRQFVVEDHEVKESFEMKDFSKNEQKEK</sequence>
<name>SEY1_YEAS6</name>
<gene>
    <name evidence="1" type="primary">SEY1</name>
    <name type="ORF">AWRI1631_153200</name>
</gene>
<dbReference type="EC" id="3.6.5.-" evidence="1"/>
<dbReference type="EMBL" id="ABSV01002180">
    <property type="protein sequence ID" value="EDZ69238.1"/>
    <property type="molecule type" value="Genomic_DNA"/>
</dbReference>
<dbReference type="SMR" id="B5VS52"/>
<dbReference type="Proteomes" id="UP000008988">
    <property type="component" value="Unassembled WGS sequence"/>
</dbReference>
<dbReference type="GO" id="GO:0005789">
    <property type="term" value="C:endoplasmic reticulum membrane"/>
    <property type="evidence" value="ECO:0007669"/>
    <property type="project" value="UniProtKB-SubCell"/>
</dbReference>
<dbReference type="GO" id="GO:0005525">
    <property type="term" value="F:GTP binding"/>
    <property type="evidence" value="ECO:0007669"/>
    <property type="project" value="UniProtKB-UniRule"/>
</dbReference>
<dbReference type="GO" id="GO:0003924">
    <property type="term" value="F:GTPase activity"/>
    <property type="evidence" value="ECO:0007669"/>
    <property type="project" value="UniProtKB-UniRule"/>
</dbReference>
<dbReference type="GO" id="GO:0016320">
    <property type="term" value="P:endoplasmic reticulum membrane fusion"/>
    <property type="evidence" value="ECO:0007669"/>
    <property type="project" value="TreeGrafter"/>
</dbReference>
<dbReference type="CDD" id="cd01851">
    <property type="entry name" value="GBP"/>
    <property type="match status" value="1"/>
</dbReference>
<dbReference type="FunFam" id="3.40.50.300:FF:000727">
    <property type="entry name" value="Protein SEY1 homolog"/>
    <property type="match status" value="1"/>
</dbReference>
<dbReference type="Gene3D" id="3.40.50.300">
    <property type="entry name" value="P-loop containing nucleotide triphosphate hydrolases"/>
    <property type="match status" value="1"/>
</dbReference>
<dbReference type="HAMAP" id="MF_03109">
    <property type="entry name" value="Sey1"/>
    <property type="match status" value="1"/>
</dbReference>
<dbReference type="InterPro" id="IPR030386">
    <property type="entry name" value="G_GB1_RHD3_dom"/>
</dbReference>
<dbReference type="InterPro" id="IPR027417">
    <property type="entry name" value="P-loop_NTPase"/>
</dbReference>
<dbReference type="InterPro" id="IPR008803">
    <property type="entry name" value="RHD3/Sey1"/>
</dbReference>
<dbReference type="InterPro" id="IPR046758">
    <property type="entry name" value="Sey1/RHD3-like_3HB"/>
</dbReference>
<dbReference type="PANTHER" id="PTHR45923">
    <property type="entry name" value="PROTEIN SEY1"/>
    <property type="match status" value="1"/>
</dbReference>
<dbReference type="PANTHER" id="PTHR45923:SF2">
    <property type="entry name" value="PROTEIN SEY1"/>
    <property type="match status" value="1"/>
</dbReference>
<dbReference type="Pfam" id="PF05879">
    <property type="entry name" value="RHD3_GTPase"/>
    <property type="match status" value="1"/>
</dbReference>
<dbReference type="Pfam" id="PF20428">
    <property type="entry name" value="Sey1_3HB"/>
    <property type="match status" value="1"/>
</dbReference>
<dbReference type="SUPFAM" id="SSF52540">
    <property type="entry name" value="P-loop containing nucleoside triphosphate hydrolases"/>
    <property type="match status" value="1"/>
</dbReference>
<dbReference type="PROSITE" id="PS51715">
    <property type="entry name" value="G_GB1_RHD3"/>
    <property type="match status" value="1"/>
</dbReference>